<feature type="chain" id="PRO_0000310827" description="Uncharacterized amino-acid permease PB2B2.01">
    <location>
        <begin position="1"/>
        <end position="585"/>
    </location>
</feature>
<feature type="topological domain" description="Cytoplasmic" evidence="1 2">
    <location>
        <begin position="1"/>
        <end position="89"/>
    </location>
</feature>
<feature type="transmembrane region" description="Helical" evidence="2">
    <location>
        <begin position="90"/>
        <end position="110"/>
    </location>
</feature>
<feature type="topological domain" description="Extracellular" evidence="1 2">
    <location>
        <begin position="111"/>
        <end position="121"/>
    </location>
</feature>
<feature type="transmembrane region" description="Helical" evidence="2">
    <location>
        <begin position="122"/>
        <end position="142"/>
    </location>
</feature>
<feature type="topological domain" description="Cytoplasmic" evidence="1 2">
    <location>
        <begin position="143"/>
        <end position="159"/>
    </location>
</feature>
<feature type="transmembrane region" description="Helical" evidence="2">
    <location>
        <begin position="160"/>
        <end position="180"/>
    </location>
</feature>
<feature type="topological domain" description="Extracellular" evidence="1 2">
    <location>
        <begin position="181"/>
        <end position="193"/>
    </location>
</feature>
<feature type="transmembrane region" description="Helical" evidence="2">
    <location>
        <begin position="194"/>
        <end position="214"/>
    </location>
</feature>
<feature type="topological domain" description="Cytoplasmic" evidence="1 2">
    <location>
        <begin position="215"/>
        <end position="221"/>
    </location>
</feature>
<feature type="transmembrane region" description="Helical" evidence="2">
    <location>
        <begin position="222"/>
        <end position="242"/>
    </location>
</feature>
<feature type="topological domain" description="Extracellular" evidence="1 2">
    <location>
        <begin position="243"/>
        <end position="271"/>
    </location>
</feature>
<feature type="transmembrane region" description="Helical" evidence="2">
    <location>
        <begin position="272"/>
        <end position="292"/>
    </location>
</feature>
<feature type="topological domain" description="Cytoplasmic" evidence="1 2">
    <location>
        <begin position="293"/>
        <end position="313"/>
    </location>
</feature>
<feature type="transmembrane region" description="Helical" evidence="2">
    <location>
        <begin position="314"/>
        <end position="334"/>
    </location>
</feature>
<feature type="topological domain" description="Extracellular" evidence="1 2">
    <location>
        <begin position="335"/>
        <end position="361"/>
    </location>
</feature>
<feature type="transmembrane region" description="Helical" evidence="2">
    <location>
        <begin position="362"/>
        <end position="382"/>
    </location>
</feature>
<feature type="topological domain" description="Cytoplasmic" evidence="1 2">
    <location>
        <begin position="383"/>
        <end position="407"/>
    </location>
</feature>
<feature type="transmembrane region" description="Helical" evidence="2">
    <location>
        <begin position="408"/>
        <end position="428"/>
    </location>
</feature>
<feature type="topological domain" description="Extracellular" evidence="1 2">
    <location>
        <begin position="429"/>
        <end position="436"/>
    </location>
</feature>
<feature type="transmembrane region" description="Helical" evidence="2">
    <location>
        <begin position="437"/>
        <end position="457"/>
    </location>
</feature>
<feature type="topological domain" description="Cytoplasmic" evidence="1 2">
    <location>
        <begin position="458"/>
        <end position="486"/>
    </location>
</feature>
<feature type="transmembrane region" description="Helical" evidence="2">
    <location>
        <begin position="487"/>
        <end position="507"/>
    </location>
</feature>
<feature type="topological domain" description="Extracellular" evidence="1 2">
    <location>
        <begin position="508"/>
        <end position="511"/>
    </location>
</feature>
<feature type="transmembrane region" description="Helical" evidence="2">
    <location>
        <begin position="512"/>
        <end position="532"/>
    </location>
</feature>
<feature type="topological domain" description="Cytoplasmic" evidence="1 2">
    <location>
        <begin position="533"/>
        <end position="585"/>
    </location>
</feature>
<feature type="region of interest" description="Disordered" evidence="3">
    <location>
        <begin position="1"/>
        <end position="34"/>
    </location>
</feature>
<feature type="compositionally biased region" description="Low complexity" evidence="3">
    <location>
        <begin position="10"/>
        <end position="19"/>
    </location>
</feature>
<feature type="compositionally biased region" description="Basic and acidic residues" evidence="3">
    <location>
        <begin position="25"/>
        <end position="34"/>
    </location>
</feature>
<reference evidence="6" key="1">
    <citation type="journal article" date="2002" name="Nature">
        <title>The genome sequence of Schizosaccharomyces pombe.</title>
        <authorList>
            <person name="Wood V."/>
            <person name="Gwilliam R."/>
            <person name="Rajandream M.A."/>
            <person name="Lyne M.H."/>
            <person name="Lyne R."/>
            <person name="Stewart A."/>
            <person name="Sgouros J.G."/>
            <person name="Peat N."/>
            <person name="Hayles J."/>
            <person name="Baker S.G."/>
            <person name="Basham D."/>
            <person name="Bowman S."/>
            <person name="Brooks K."/>
            <person name="Brown D."/>
            <person name="Brown S."/>
            <person name="Chillingworth T."/>
            <person name="Churcher C.M."/>
            <person name="Collins M."/>
            <person name="Connor R."/>
            <person name="Cronin A."/>
            <person name="Davis P."/>
            <person name="Feltwell T."/>
            <person name="Fraser A."/>
            <person name="Gentles S."/>
            <person name="Goble A."/>
            <person name="Hamlin N."/>
            <person name="Harris D.E."/>
            <person name="Hidalgo J."/>
            <person name="Hodgson G."/>
            <person name="Holroyd S."/>
            <person name="Hornsby T."/>
            <person name="Howarth S."/>
            <person name="Huckle E.J."/>
            <person name="Hunt S."/>
            <person name="Jagels K."/>
            <person name="James K.D."/>
            <person name="Jones L."/>
            <person name="Jones M."/>
            <person name="Leather S."/>
            <person name="McDonald S."/>
            <person name="McLean J."/>
            <person name="Mooney P."/>
            <person name="Moule S."/>
            <person name="Mungall K.L."/>
            <person name="Murphy L.D."/>
            <person name="Niblett D."/>
            <person name="Odell C."/>
            <person name="Oliver K."/>
            <person name="O'Neil S."/>
            <person name="Pearson D."/>
            <person name="Quail M.A."/>
            <person name="Rabbinowitsch E."/>
            <person name="Rutherford K.M."/>
            <person name="Rutter S."/>
            <person name="Saunders D."/>
            <person name="Seeger K."/>
            <person name="Sharp S."/>
            <person name="Skelton J."/>
            <person name="Simmonds M.N."/>
            <person name="Squares R."/>
            <person name="Squares S."/>
            <person name="Stevens K."/>
            <person name="Taylor K."/>
            <person name="Taylor R.G."/>
            <person name="Tivey A."/>
            <person name="Walsh S.V."/>
            <person name="Warren T."/>
            <person name="Whitehead S."/>
            <person name="Woodward J.R."/>
            <person name="Volckaert G."/>
            <person name="Aert R."/>
            <person name="Robben J."/>
            <person name="Grymonprez B."/>
            <person name="Weltjens I."/>
            <person name="Vanstreels E."/>
            <person name="Rieger M."/>
            <person name="Schaefer M."/>
            <person name="Mueller-Auer S."/>
            <person name="Gabel C."/>
            <person name="Fuchs M."/>
            <person name="Duesterhoeft A."/>
            <person name="Fritzc C."/>
            <person name="Holzer E."/>
            <person name="Moestl D."/>
            <person name="Hilbert H."/>
            <person name="Borzym K."/>
            <person name="Langer I."/>
            <person name="Beck A."/>
            <person name="Lehrach H."/>
            <person name="Reinhardt R."/>
            <person name="Pohl T.M."/>
            <person name="Eger P."/>
            <person name="Zimmermann W."/>
            <person name="Wedler H."/>
            <person name="Wambutt R."/>
            <person name="Purnelle B."/>
            <person name="Goffeau A."/>
            <person name="Cadieu E."/>
            <person name="Dreano S."/>
            <person name="Gloux S."/>
            <person name="Lelaure V."/>
            <person name="Mottier S."/>
            <person name="Galibert F."/>
            <person name="Aves S.J."/>
            <person name="Xiang Z."/>
            <person name="Hunt C."/>
            <person name="Moore K."/>
            <person name="Hurst S.M."/>
            <person name="Lucas M."/>
            <person name="Rochet M."/>
            <person name="Gaillardin C."/>
            <person name="Tallada V.A."/>
            <person name="Garzon A."/>
            <person name="Thode G."/>
            <person name="Daga R.R."/>
            <person name="Cruzado L."/>
            <person name="Jimenez J."/>
            <person name="Sanchez M."/>
            <person name="del Rey F."/>
            <person name="Benito J."/>
            <person name="Dominguez A."/>
            <person name="Revuelta J.L."/>
            <person name="Moreno S."/>
            <person name="Armstrong J."/>
            <person name="Forsburg S.L."/>
            <person name="Cerutti L."/>
            <person name="Lowe T."/>
            <person name="McCombie W.R."/>
            <person name="Paulsen I."/>
            <person name="Potashkin J."/>
            <person name="Shpakovski G.V."/>
            <person name="Ussery D."/>
            <person name="Barrell B.G."/>
            <person name="Nurse P."/>
        </authorList>
    </citation>
    <scope>NUCLEOTIDE SEQUENCE [LARGE SCALE GENOMIC DNA]</scope>
    <source>
        <strain>972 / ATCC 24843</strain>
    </source>
</reference>
<reference evidence="5" key="2">
    <citation type="journal article" date="2006" name="Nat. Biotechnol.">
        <title>ORFeome cloning and global analysis of protein localization in the fission yeast Schizosaccharomyces pombe.</title>
        <authorList>
            <person name="Matsuyama A."/>
            <person name="Arai R."/>
            <person name="Yashiroda Y."/>
            <person name="Shirai A."/>
            <person name="Kamata A."/>
            <person name="Sekido S."/>
            <person name="Kobayashi Y."/>
            <person name="Hashimoto A."/>
            <person name="Hamamoto M."/>
            <person name="Hiraoka Y."/>
            <person name="Horinouchi S."/>
            <person name="Yoshida M."/>
        </authorList>
    </citation>
    <scope>SUBCELLULAR LOCATION [LARGE SCALE ANALYSIS]</scope>
</reference>
<organism>
    <name type="scientific">Schizosaccharomyces pombe (strain 972 / ATCC 24843)</name>
    <name type="common">Fission yeast</name>
    <dbReference type="NCBI Taxonomy" id="284812"/>
    <lineage>
        <taxon>Eukaryota</taxon>
        <taxon>Fungi</taxon>
        <taxon>Dikarya</taxon>
        <taxon>Ascomycota</taxon>
        <taxon>Taphrinomycotina</taxon>
        <taxon>Schizosaccharomycetes</taxon>
        <taxon>Schizosaccharomycetales</taxon>
        <taxon>Schizosaccharomycetaceae</taxon>
        <taxon>Schizosaccharomyces</taxon>
    </lineage>
</organism>
<accession>Q9HDV2</accession>
<keyword id="KW-0029">Amino-acid transport</keyword>
<keyword id="KW-0256">Endoplasmic reticulum</keyword>
<keyword id="KW-0472">Membrane</keyword>
<keyword id="KW-1185">Reference proteome</keyword>
<keyword id="KW-0812">Transmembrane</keyword>
<keyword id="KW-1133">Transmembrane helix</keyword>
<keyword id="KW-0813">Transport</keyword>
<comment type="subcellular location">
    <subcellularLocation>
        <location evidence="4">Endoplasmic reticulum</location>
    </subcellularLocation>
    <subcellularLocation>
        <location evidence="2">Membrane</location>
        <topology evidence="2">Multi-pass membrane protein</topology>
    </subcellularLocation>
</comment>
<comment type="similarity">
    <text evidence="2">Belongs to the amino acid-polyamine-organocation (APC) superfamily.</text>
</comment>
<name>YHE1_SCHPO</name>
<evidence type="ECO:0000250" key="1">
    <source>
        <dbReference type="UniProtKB" id="P19145"/>
    </source>
</evidence>
<evidence type="ECO:0000255" key="2"/>
<evidence type="ECO:0000256" key="3">
    <source>
        <dbReference type="SAM" id="MobiDB-lite"/>
    </source>
</evidence>
<evidence type="ECO:0000269" key="4">
    <source>
    </source>
</evidence>
<evidence type="ECO:0000305" key="5"/>
<evidence type="ECO:0000312" key="6">
    <source>
        <dbReference type="EMBL" id="CAC21403.1"/>
    </source>
</evidence>
<proteinExistence type="inferred from homology"/>
<dbReference type="EMBL" id="CU329671">
    <property type="protein sequence ID" value="CAC21403.1"/>
    <property type="molecule type" value="Genomic_DNA"/>
</dbReference>
<dbReference type="SMR" id="Q9HDV2"/>
<dbReference type="BioGRID" id="277912">
    <property type="interactions" value="1"/>
</dbReference>
<dbReference type="FunCoup" id="Q9HDV2">
    <property type="interactions" value="323"/>
</dbReference>
<dbReference type="STRING" id="284812.Q9HDV2"/>
<dbReference type="PaxDb" id="4896-SPBPB2B2.01.1"/>
<dbReference type="EnsemblFungi" id="SPBPB2B2.01.1">
    <property type="protein sequence ID" value="SPBPB2B2.01.1:pep"/>
    <property type="gene ID" value="SPBPB2B2.01"/>
</dbReference>
<dbReference type="KEGG" id="spo:2541403"/>
<dbReference type="PomBase" id="SPBPB2B2.01"/>
<dbReference type="VEuPathDB" id="FungiDB:SPBPB2B2.01"/>
<dbReference type="eggNOG" id="KOG1286">
    <property type="taxonomic scope" value="Eukaryota"/>
</dbReference>
<dbReference type="HOGENOM" id="CLU_007946_12_0_1"/>
<dbReference type="InParanoid" id="Q9HDV2"/>
<dbReference type="OMA" id="FRENAFR"/>
<dbReference type="PhylomeDB" id="Q9HDV2"/>
<dbReference type="PRO" id="PR:Q9HDV2"/>
<dbReference type="Proteomes" id="UP000002485">
    <property type="component" value="Chromosome II"/>
</dbReference>
<dbReference type="GO" id="GO:0005783">
    <property type="term" value="C:endoplasmic reticulum"/>
    <property type="evidence" value="ECO:0007669"/>
    <property type="project" value="UniProtKB-SubCell"/>
</dbReference>
<dbReference type="GO" id="GO:0016020">
    <property type="term" value="C:membrane"/>
    <property type="evidence" value="ECO:0000318"/>
    <property type="project" value="GO_Central"/>
</dbReference>
<dbReference type="GO" id="GO:0015171">
    <property type="term" value="F:amino acid transmembrane transporter activity"/>
    <property type="evidence" value="ECO:0000318"/>
    <property type="project" value="GO_Central"/>
</dbReference>
<dbReference type="GO" id="GO:0003333">
    <property type="term" value="P:amino acid transmembrane transport"/>
    <property type="evidence" value="ECO:0000318"/>
    <property type="project" value="GO_Central"/>
</dbReference>
<dbReference type="FunFam" id="1.20.1740.10:FF:000017">
    <property type="entry name" value="Amino acid permease"/>
    <property type="match status" value="1"/>
</dbReference>
<dbReference type="Gene3D" id="1.20.1740.10">
    <property type="entry name" value="Amino acid/polyamine transporter I"/>
    <property type="match status" value="1"/>
</dbReference>
<dbReference type="InterPro" id="IPR004841">
    <property type="entry name" value="AA-permease/SLC12A_dom"/>
</dbReference>
<dbReference type="InterPro" id="IPR004840">
    <property type="entry name" value="Amino_acid_permease_CS"/>
</dbReference>
<dbReference type="InterPro" id="IPR050524">
    <property type="entry name" value="APC_YAT"/>
</dbReference>
<dbReference type="PANTHER" id="PTHR43341">
    <property type="entry name" value="AMINO ACID PERMEASE"/>
    <property type="match status" value="1"/>
</dbReference>
<dbReference type="PANTHER" id="PTHR43341:SF42">
    <property type="entry name" value="DIFFERENTIATION PROCESS PUTATIVE AMINO-ACID PERMEASE ISP5-RELATED"/>
    <property type="match status" value="1"/>
</dbReference>
<dbReference type="Pfam" id="PF00324">
    <property type="entry name" value="AA_permease"/>
    <property type="match status" value="1"/>
</dbReference>
<dbReference type="PIRSF" id="PIRSF006060">
    <property type="entry name" value="AA_transporter"/>
    <property type="match status" value="1"/>
</dbReference>
<dbReference type="PROSITE" id="PS00218">
    <property type="entry name" value="AMINO_ACID_PERMEASE_1"/>
    <property type="match status" value="1"/>
</dbReference>
<sequence length="585" mass="65129">MNAYVRDSESVYSESYPPENFISNEPEKSKDKDNFNGEEVISYVGEVETVPAKEENVFRRFINGFKIEKNQQDSAGQGLKRRLKSRHIQMIGIGGAIGTGVWVGSSKSLYRGGAASVLIDYCIVGTMVFCTVYALGELAVAFPTRGSFVTHATRFIDESWGFALSWNYVFSFIVTIPLELTTGTMMIKYWTNLNSGIWVTVFIVFLFFINIFGVKGYGEMEFIMSTIKVVAMCGFIILGIIIDCGGVPTDHRGYMGTHIFRENAFRHKFKGFCAVFTSAAFSFSGTEYVGVAAAETENPAKAFPVAVRQTLFRIAIFYILSLFIVSLLISGADPRLTSYHGVDASPFVLAIKDANIKALPSILNAIILISVISSANAQLYAGSRAIHSLGCNGFAPKCFTLVDREGRPLVALLILFLFMFLGYLVETGQYDTVFDWMLSISGLGTLFCWGSICLAHIRYRAAMKHQNRSLKEVGFVSPFNVYASYYAFILVCLVLAAEFYVSIFPVGGKPDASAFFENYLSAPVILVFFICHKLYYKTKRITLSNMDLETDFAYKTPVEEEEEEEKSAGSLSIKQRMKKLSDMMC</sequence>
<gene>
    <name type="ORF">SPBPB2B2.01</name>
</gene>
<protein>
    <recommendedName>
        <fullName>Uncharacterized amino-acid permease PB2B2.01</fullName>
    </recommendedName>
</protein>